<reference key="1">
    <citation type="journal article" date="2000" name="Nature">
        <title>Sequence and analysis of chromosome 3 of the plant Arabidopsis thaliana.</title>
        <authorList>
            <person name="Salanoubat M."/>
            <person name="Lemcke K."/>
            <person name="Rieger M."/>
            <person name="Ansorge W."/>
            <person name="Unseld M."/>
            <person name="Fartmann B."/>
            <person name="Valle G."/>
            <person name="Bloecker H."/>
            <person name="Perez-Alonso M."/>
            <person name="Obermaier B."/>
            <person name="Delseny M."/>
            <person name="Boutry M."/>
            <person name="Grivell L.A."/>
            <person name="Mache R."/>
            <person name="Puigdomenech P."/>
            <person name="De Simone V."/>
            <person name="Choisne N."/>
            <person name="Artiguenave F."/>
            <person name="Robert C."/>
            <person name="Brottier P."/>
            <person name="Wincker P."/>
            <person name="Cattolico L."/>
            <person name="Weissenbach J."/>
            <person name="Saurin W."/>
            <person name="Quetier F."/>
            <person name="Schaefer M."/>
            <person name="Mueller-Auer S."/>
            <person name="Gabel C."/>
            <person name="Fuchs M."/>
            <person name="Benes V."/>
            <person name="Wurmbach E."/>
            <person name="Drzonek H."/>
            <person name="Erfle H."/>
            <person name="Jordan N."/>
            <person name="Bangert S."/>
            <person name="Wiedelmann R."/>
            <person name="Kranz H."/>
            <person name="Voss H."/>
            <person name="Holland R."/>
            <person name="Brandt P."/>
            <person name="Nyakatura G."/>
            <person name="Vezzi A."/>
            <person name="D'Angelo M."/>
            <person name="Pallavicini A."/>
            <person name="Toppo S."/>
            <person name="Simionati B."/>
            <person name="Conrad A."/>
            <person name="Hornischer K."/>
            <person name="Kauer G."/>
            <person name="Loehnert T.-H."/>
            <person name="Nordsiek G."/>
            <person name="Reichelt J."/>
            <person name="Scharfe M."/>
            <person name="Schoen O."/>
            <person name="Bargues M."/>
            <person name="Terol J."/>
            <person name="Climent J."/>
            <person name="Navarro P."/>
            <person name="Collado C."/>
            <person name="Perez-Perez A."/>
            <person name="Ottenwaelder B."/>
            <person name="Duchemin D."/>
            <person name="Cooke R."/>
            <person name="Laudie M."/>
            <person name="Berger-Llauro C."/>
            <person name="Purnelle B."/>
            <person name="Masuy D."/>
            <person name="de Haan M."/>
            <person name="Maarse A.C."/>
            <person name="Alcaraz J.-P."/>
            <person name="Cottet A."/>
            <person name="Casacuberta E."/>
            <person name="Monfort A."/>
            <person name="Argiriou A."/>
            <person name="Flores M."/>
            <person name="Liguori R."/>
            <person name="Vitale D."/>
            <person name="Mannhaupt G."/>
            <person name="Haase D."/>
            <person name="Schoof H."/>
            <person name="Rudd S."/>
            <person name="Zaccaria P."/>
            <person name="Mewes H.-W."/>
            <person name="Mayer K.F.X."/>
            <person name="Kaul S."/>
            <person name="Town C.D."/>
            <person name="Koo H.L."/>
            <person name="Tallon L.J."/>
            <person name="Jenkins J."/>
            <person name="Rooney T."/>
            <person name="Rizzo M."/>
            <person name="Walts A."/>
            <person name="Utterback T."/>
            <person name="Fujii C.Y."/>
            <person name="Shea T.P."/>
            <person name="Creasy T.H."/>
            <person name="Haas B."/>
            <person name="Maiti R."/>
            <person name="Wu D."/>
            <person name="Peterson J."/>
            <person name="Van Aken S."/>
            <person name="Pai G."/>
            <person name="Militscher J."/>
            <person name="Sellers P."/>
            <person name="Gill J.E."/>
            <person name="Feldblyum T.V."/>
            <person name="Preuss D."/>
            <person name="Lin X."/>
            <person name="Nierman W.C."/>
            <person name="Salzberg S.L."/>
            <person name="White O."/>
            <person name="Venter J.C."/>
            <person name="Fraser C.M."/>
            <person name="Kaneko T."/>
            <person name="Nakamura Y."/>
            <person name="Sato S."/>
            <person name="Kato T."/>
            <person name="Asamizu E."/>
            <person name="Sasamoto S."/>
            <person name="Kimura T."/>
            <person name="Idesawa K."/>
            <person name="Kawashima K."/>
            <person name="Kishida Y."/>
            <person name="Kiyokawa C."/>
            <person name="Kohara M."/>
            <person name="Matsumoto M."/>
            <person name="Matsuno A."/>
            <person name="Muraki A."/>
            <person name="Nakayama S."/>
            <person name="Nakazaki N."/>
            <person name="Shinpo S."/>
            <person name="Takeuchi C."/>
            <person name="Wada T."/>
            <person name="Watanabe A."/>
            <person name="Yamada M."/>
            <person name="Yasuda M."/>
            <person name="Tabata S."/>
        </authorList>
    </citation>
    <scope>NUCLEOTIDE SEQUENCE [LARGE SCALE GENOMIC DNA]</scope>
    <source>
        <strain>cv. Columbia</strain>
    </source>
</reference>
<reference key="2">
    <citation type="journal article" date="2017" name="Plant J.">
        <title>Araport11: a complete reannotation of the Arabidopsis thaliana reference genome.</title>
        <authorList>
            <person name="Cheng C.Y."/>
            <person name="Krishnakumar V."/>
            <person name="Chan A.P."/>
            <person name="Thibaud-Nissen F."/>
            <person name="Schobel S."/>
            <person name="Town C.D."/>
        </authorList>
    </citation>
    <scope>GENOME REANNOTATION</scope>
    <source>
        <strain>cv. Columbia</strain>
    </source>
</reference>
<organism>
    <name type="scientific">Arabidopsis thaliana</name>
    <name type="common">Mouse-ear cress</name>
    <dbReference type="NCBI Taxonomy" id="3702"/>
    <lineage>
        <taxon>Eukaryota</taxon>
        <taxon>Viridiplantae</taxon>
        <taxon>Streptophyta</taxon>
        <taxon>Embryophyta</taxon>
        <taxon>Tracheophyta</taxon>
        <taxon>Spermatophyta</taxon>
        <taxon>Magnoliopsida</taxon>
        <taxon>eudicotyledons</taxon>
        <taxon>Gunneridae</taxon>
        <taxon>Pentapetalae</taxon>
        <taxon>rosids</taxon>
        <taxon>malvids</taxon>
        <taxon>Brassicales</taxon>
        <taxon>Brassicaceae</taxon>
        <taxon>Camelineae</taxon>
        <taxon>Arabidopsis</taxon>
    </lineage>
</organism>
<name>UVSSA_ARATH</name>
<sequence length="664" mass="75985">MEGRDDGGGKVIGLIEKATKSTAQEVDPRLLKAIKSIVRYSDSEVRLSSQTLMELMRHNHSQVRYLTLFIIDELFMRSKLFRTLIIENLDQLLSLSIGFRSNLPLPAPPAVATTLRSKAIEFLEKWNLSFGFHYKELRLGFDYLKNTLKLKFPDLQANAARIQRERQEREMKTKEILRNKFDSLRVSFGLFKYEIEVTIKEIKECMEIVQWRGDDGVPLAILDEEDFEEIRCSHLRQIRLDSLKQSEKVEETGENRIVFDVLREQCKLLVTKHLISVQEGISLLIRVDVSDNRTRDSMLKDLIDIRNNILAAKKKWEEAGFTMSRMTDIHGNEETNEEEEDIWEEDDGKVKTDSVKNVAHVMRTQQSENSSLPSSGEAKKSTSEARSNKVSNTKKVGSSGNSLRDKLISEAPVMNWGSQLTNWESTTEVRANYRGLEIESHWGRVDQDAIIPADKIAELNLQATVYREERTETPPCRASLKKGGLCQRRDLRVCPFHGPIVPRDDEGNTIIQESPLDESENQTSSTSGTNQDVSMDETTSDSDPNQLARQIAKEALKNIREKDKEVVRKRAKLVKVKVKEHNHEVLRGAAIASTSRSNAMDDEFDRVFAEKKNKKQTFSTRRKKTTAKDRISQRLFSNRVKGTNPQQLAQGNDEKCRDTSANQW</sequence>
<gene>
    <name type="ordered locus">At3g61800</name>
    <name type="ORF">F15G16.190</name>
</gene>
<proteinExistence type="inferred from homology"/>
<accession>Q9M358</accession>
<keyword id="KW-0158">Chromosome</keyword>
<keyword id="KW-0175">Coiled coil</keyword>
<keyword id="KW-0227">DNA damage</keyword>
<keyword id="KW-0234">DNA repair</keyword>
<keyword id="KW-0479">Metal-binding</keyword>
<keyword id="KW-1185">Reference proteome</keyword>
<keyword id="KW-0862">Zinc</keyword>
<keyword id="KW-0863">Zinc-finger</keyword>
<comment type="subcellular location">
    <subcellularLocation>
        <location evidence="2">Chromosome</location>
    </subcellularLocation>
    <text evidence="2">Accumulates at UV DNA damage sites.</text>
</comment>
<comment type="similarity">
    <text evidence="4">Belongs to the UVSSA family.</text>
</comment>
<feature type="chain" id="PRO_0000418000" description="UV-stimulated scaffold protein A homolog">
    <location>
        <begin position="1"/>
        <end position="664"/>
    </location>
</feature>
<feature type="zinc finger region" description="UVSSA-type" evidence="2">
    <location>
        <begin position="473"/>
        <end position="500"/>
    </location>
</feature>
<feature type="region of interest" description="VHS-like">
    <location>
        <begin position="10"/>
        <end position="153"/>
    </location>
</feature>
<feature type="region of interest" description="Disordered" evidence="3">
    <location>
        <begin position="330"/>
        <end position="350"/>
    </location>
</feature>
<feature type="region of interest" description="Disordered" evidence="3">
    <location>
        <begin position="362"/>
        <end position="403"/>
    </location>
</feature>
<feature type="region of interest" description="Disordered" evidence="3">
    <location>
        <begin position="514"/>
        <end position="546"/>
    </location>
</feature>
<feature type="region of interest" description="Disordered" evidence="3">
    <location>
        <begin position="640"/>
        <end position="664"/>
    </location>
</feature>
<feature type="coiled-coil region" evidence="1">
    <location>
        <begin position="148"/>
        <end position="180"/>
    </location>
</feature>
<feature type="compositionally biased region" description="Acidic residues" evidence="3">
    <location>
        <begin position="334"/>
        <end position="347"/>
    </location>
</feature>
<feature type="compositionally biased region" description="Polar residues" evidence="3">
    <location>
        <begin position="363"/>
        <end position="374"/>
    </location>
</feature>
<feature type="compositionally biased region" description="Basic and acidic residues" evidence="3">
    <location>
        <begin position="377"/>
        <end position="387"/>
    </location>
</feature>
<feature type="compositionally biased region" description="Polar residues" evidence="3">
    <location>
        <begin position="388"/>
        <end position="402"/>
    </location>
</feature>
<feature type="compositionally biased region" description="Polar residues" evidence="3">
    <location>
        <begin position="521"/>
        <end position="533"/>
    </location>
</feature>
<feature type="compositionally biased region" description="Polar residues" evidence="3">
    <location>
        <begin position="640"/>
        <end position="650"/>
    </location>
</feature>
<feature type="binding site" evidence="2">
    <location>
        <position position="476"/>
    </location>
    <ligand>
        <name>Zn(2+)</name>
        <dbReference type="ChEBI" id="CHEBI:29105"/>
    </ligand>
</feature>
<feature type="binding site" evidence="2">
    <location>
        <position position="486"/>
    </location>
    <ligand>
        <name>Zn(2+)</name>
        <dbReference type="ChEBI" id="CHEBI:29105"/>
    </ligand>
</feature>
<feature type="binding site" evidence="2">
    <location>
        <position position="494"/>
    </location>
    <ligand>
        <name>Zn(2+)</name>
        <dbReference type="ChEBI" id="CHEBI:29105"/>
    </ligand>
</feature>
<feature type="binding site" evidence="2">
    <location>
        <position position="497"/>
    </location>
    <ligand>
        <name>Zn(2+)</name>
        <dbReference type="ChEBI" id="CHEBI:29105"/>
    </ligand>
</feature>
<dbReference type="EMBL" id="AL132959">
    <property type="protein sequence ID" value="CAB71110.1"/>
    <property type="molecule type" value="Genomic_DNA"/>
</dbReference>
<dbReference type="EMBL" id="CP002686">
    <property type="protein sequence ID" value="AEE80258.1"/>
    <property type="molecule type" value="Genomic_DNA"/>
</dbReference>
<dbReference type="EMBL" id="CP002686">
    <property type="protein sequence ID" value="ANM64655.1"/>
    <property type="molecule type" value="Genomic_DNA"/>
</dbReference>
<dbReference type="PIR" id="T47972">
    <property type="entry name" value="T47972"/>
</dbReference>
<dbReference type="RefSeq" id="NP_001326668.1">
    <property type="nucleotide sequence ID" value="NM_001340128.1"/>
</dbReference>
<dbReference type="RefSeq" id="NP_191739.1">
    <property type="nucleotide sequence ID" value="NM_116045.3"/>
</dbReference>
<dbReference type="SMR" id="Q9M358"/>
<dbReference type="FunCoup" id="Q9M358">
    <property type="interactions" value="2349"/>
</dbReference>
<dbReference type="STRING" id="3702.Q9M358"/>
<dbReference type="iPTMnet" id="Q9M358"/>
<dbReference type="PaxDb" id="3702-AT3G61800.1"/>
<dbReference type="ProteomicsDB" id="243243"/>
<dbReference type="EnsemblPlants" id="AT3G61800.1">
    <property type="protein sequence ID" value="AT3G61800.1"/>
    <property type="gene ID" value="AT3G61800"/>
</dbReference>
<dbReference type="EnsemblPlants" id="AT3G61800.2">
    <property type="protein sequence ID" value="AT3G61800.2"/>
    <property type="gene ID" value="AT3G61800"/>
</dbReference>
<dbReference type="GeneID" id="825353"/>
<dbReference type="Gramene" id="AT3G61800.1">
    <property type="protein sequence ID" value="AT3G61800.1"/>
    <property type="gene ID" value="AT3G61800"/>
</dbReference>
<dbReference type="Gramene" id="AT3G61800.2">
    <property type="protein sequence ID" value="AT3G61800.2"/>
    <property type="gene ID" value="AT3G61800"/>
</dbReference>
<dbReference type="KEGG" id="ath:AT3G61800"/>
<dbReference type="Araport" id="AT3G61800"/>
<dbReference type="TAIR" id="AT3G61800">
    <property type="gene designation" value="UVSSA"/>
</dbReference>
<dbReference type="eggNOG" id="KOG2374">
    <property type="taxonomic scope" value="Eukaryota"/>
</dbReference>
<dbReference type="HOGENOM" id="CLU_027998_0_0_1"/>
<dbReference type="InParanoid" id="Q9M358"/>
<dbReference type="OMA" id="EEHAEMR"/>
<dbReference type="OrthoDB" id="5594015at2759"/>
<dbReference type="PhylomeDB" id="Q9M358"/>
<dbReference type="PRO" id="PR:Q9M358"/>
<dbReference type="Proteomes" id="UP000006548">
    <property type="component" value="Chromosome 3"/>
</dbReference>
<dbReference type="ExpressionAtlas" id="Q9M358">
    <property type="expression patterns" value="baseline and differential"/>
</dbReference>
<dbReference type="GO" id="GO:0009411">
    <property type="term" value="P:response to UV"/>
    <property type="evidence" value="ECO:0007669"/>
    <property type="project" value="InterPro"/>
</dbReference>
<dbReference type="InterPro" id="IPR008942">
    <property type="entry name" value="ENTH_VHS"/>
</dbReference>
<dbReference type="InterPro" id="IPR018610">
    <property type="entry name" value="UVSSA"/>
</dbReference>
<dbReference type="InterPro" id="IPR049431">
    <property type="entry name" value="UVSSA_C"/>
</dbReference>
<dbReference type="InterPro" id="IPR049408">
    <property type="entry name" value="UVSSA_N_a-solenoid_rpt"/>
</dbReference>
<dbReference type="PANTHER" id="PTHR28670">
    <property type="entry name" value="UV-STIMULATED SCAFFOLD PROTEIN A"/>
    <property type="match status" value="1"/>
</dbReference>
<dbReference type="PANTHER" id="PTHR28670:SF1">
    <property type="entry name" value="UV-STIMULATED SCAFFOLD PROTEIN A"/>
    <property type="match status" value="1"/>
</dbReference>
<dbReference type="Pfam" id="PF09740">
    <property type="entry name" value="DUF2043"/>
    <property type="match status" value="1"/>
</dbReference>
<dbReference type="Pfam" id="PF20867">
    <property type="entry name" value="UVSSA_N"/>
    <property type="match status" value="1"/>
</dbReference>
<dbReference type="SUPFAM" id="SSF48464">
    <property type="entry name" value="ENTH/VHS domain"/>
    <property type="match status" value="1"/>
</dbReference>
<dbReference type="PROSITE" id="PS52058">
    <property type="entry name" value="ZF_UVSSA"/>
    <property type="match status" value="1"/>
</dbReference>
<protein>
    <recommendedName>
        <fullName>UV-stimulated scaffold protein A homolog</fullName>
    </recommendedName>
</protein>
<evidence type="ECO:0000255" key="1"/>
<evidence type="ECO:0000255" key="2">
    <source>
        <dbReference type="PROSITE-ProRule" id="PRU01403"/>
    </source>
</evidence>
<evidence type="ECO:0000256" key="3">
    <source>
        <dbReference type="SAM" id="MobiDB-lite"/>
    </source>
</evidence>
<evidence type="ECO:0000305" key="4"/>